<reference key="1">
    <citation type="journal article" date="2007" name="PLoS Genet.">
        <title>Patterns and implications of gene gain and loss in the evolution of Prochlorococcus.</title>
        <authorList>
            <person name="Kettler G.C."/>
            <person name="Martiny A.C."/>
            <person name="Huang K."/>
            <person name="Zucker J."/>
            <person name="Coleman M.L."/>
            <person name="Rodrigue S."/>
            <person name="Chen F."/>
            <person name="Lapidus A."/>
            <person name="Ferriera S."/>
            <person name="Johnson J."/>
            <person name="Steglich C."/>
            <person name="Church G.M."/>
            <person name="Richardson P."/>
            <person name="Chisholm S.W."/>
        </authorList>
    </citation>
    <scope>NUCLEOTIDE SEQUENCE [LARGE SCALE GENOMIC DNA]</scope>
    <source>
        <strain>NATL2A</strain>
    </source>
</reference>
<organism>
    <name type="scientific">Prochlorococcus marinus (strain NATL2A)</name>
    <dbReference type="NCBI Taxonomy" id="59920"/>
    <lineage>
        <taxon>Bacteria</taxon>
        <taxon>Bacillati</taxon>
        <taxon>Cyanobacteriota</taxon>
        <taxon>Cyanophyceae</taxon>
        <taxon>Synechococcales</taxon>
        <taxon>Prochlorococcaceae</taxon>
        <taxon>Prochlorococcus</taxon>
    </lineage>
</organism>
<sequence length="73" mass="8275">MTNSLFKQKLSPIKPGDPIDYKDVELLKKFITDRGKILPRRLTGLTAKQQRDLTTAVKRARIIALLPFVNPEG</sequence>
<proteinExistence type="inferred from homology"/>
<gene>
    <name evidence="1" type="primary">rpsR</name>
    <name evidence="1" type="synonym">rps18</name>
    <name type="ordered locus">PMN2A_0340</name>
</gene>
<name>RS18_PROMT</name>
<accession>Q46KZ6</accession>
<comment type="function">
    <text evidence="1">Binds as a heterodimer with protein bS6 to the central domain of the 16S rRNA, where it helps stabilize the platform of the 30S subunit.</text>
</comment>
<comment type="subunit">
    <text evidence="1">Part of the 30S ribosomal subunit. Forms a tight heterodimer with protein bS6.</text>
</comment>
<comment type="similarity">
    <text evidence="1">Belongs to the bacterial ribosomal protein bS18 family.</text>
</comment>
<evidence type="ECO:0000255" key="1">
    <source>
        <dbReference type="HAMAP-Rule" id="MF_00270"/>
    </source>
</evidence>
<evidence type="ECO:0000305" key="2"/>
<feature type="chain" id="PRO_1000003563" description="Small ribosomal subunit protein bS18">
    <location>
        <begin position="1"/>
        <end position="73"/>
    </location>
</feature>
<dbReference type="EMBL" id="CP000095">
    <property type="protein sequence ID" value="AAZ57832.1"/>
    <property type="molecule type" value="Genomic_DNA"/>
</dbReference>
<dbReference type="RefSeq" id="WP_011293874.1">
    <property type="nucleotide sequence ID" value="NC_007335.2"/>
</dbReference>
<dbReference type="SMR" id="Q46KZ6"/>
<dbReference type="STRING" id="59920.PMN2A_0340"/>
<dbReference type="KEGG" id="pmn:PMN2A_0340"/>
<dbReference type="HOGENOM" id="CLU_148710_2_3_3"/>
<dbReference type="OrthoDB" id="9812008at2"/>
<dbReference type="PhylomeDB" id="Q46KZ6"/>
<dbReference type="Proteomes" id="UP000002535">
    <property type="component" value="Chromosome"/>
</dbReference>
<dbReference type="GO" id="GO:0022627">
    <property type="term" value="C:cytosolic small ribosomal subunit"/>
    <property type="evidence" value="ECO:0007669"/>
    <property type="project" value="TreeGrafter"/>
</dbReference>
<dbReference type="GO" id="GO:0070181">
    <property type="term" value="F:small ribosomal subunit rRNA binding"/>
    <property type="evidence" value="ECO:0007669"/>
    <property type="project" value="TreeGrafter"/>
</dbReference>
<dbReference type="GO" id="GO:0003735">
    <property type="term" value="F:structural constituent of ribosome"/>
    <property type="evidence" value="ECO:0007669"/>
    <property type="project" value="InterPro"/>
</dbReference>
<dbReference type="GO" id="GO:0006412">
    <property type="term" value="P:translation"/>
    <property type="evidence" value="ECO:0007669"/>
    <property type="project" value="UniProtKB-UniRule"/>
</dbReference>
<dbReference type="FunFam" id="4.10.640.10:FF:000002">
    <property type="entry name" value="30S ribosomal protein S18, chloroplastic"/>
    <property type="match status" value="1"/>
</dbReference>
<dbReference type="Gene3D" id="4.10.640.10">
    <property type="entry name" value="Ribosomal protein S18"/>
    <property type="match status" value="1"/>
</dbReference>
<dbReference type="HAMAP" id="MF_00270">
    <property type="entry name" value="Ribosomal_bS18"/>
    <property type="match status" value="1"/>
</dbReference>
<dbReference type="InterPro" id="IPR001648">
    <property type="entry name" value="Ribosomal_bS18"/>
</dbReference>
<dbReference type="InterPro" id="IPR018275">
    <property type="entry name" value="Ribosomal_bS18_CS"/>
</dbReference>
<dbReference type="InterPro" id="IPR036870">
    <property type="entry name" value="Ribosomal_bS18_sf"/>
</dbReference>
<dbReference type="NCBIfam" id="TIGR00165">
    <property type="entry name" value="S18"/>
    <property type="match status" value="1"/>
</dbReference>
<dbReference type="PANTHER" id="PTHR13479">
    <property type="entry name" value="30S RIBOSOMAL PROTEIN S18"/>
    <property type="match status" value="1"/>
</dbReference>
<dbReference type="PANTHER" id="PTHR13479:SF40">
    <property type="entry name" value="SMALL RIBOSOMAL SUBUNIT PROTEIN BS18M"/>
    <property type="match status" value="1"/>
</dbReference>
<dbReference type="Pfam" id="PF01084">
    <property type="entry name" value="Ribosomal_S18"/>
    <property type="match status" value="1"/>
</dbReference>
<dbReference type="PRINTS" id="PR00974">
    <property type="entry name" value="RIBOSOMALS18"/>
</dbReference>
<dbReference type="SUPFAM" id="SSF46911">
    <property type="entry name" value="Ribosomal protein S18"/>
    <property type="match status" value="1"/>
</dbReference>
<dbReference type="PROSITE" id="PS00057">
    <property type="entry name" value="RIBOSOMAL_S18"/>
    <property type="match status" value="1"/>
</dbReference>
<keyword id="KW-1185">Reference proteome</keyword>
<keyword id="KW-0687">Ribonucleoprotein</keyword>
<keyword id="KW-0689">Ribosomal protein</keyword>
<keyword id="KW-0694">RNA-binding</keyword>
<keyword id="KW-0699">rRNA-binding</keyword>
<protein>
    <recommendedName>
        <fullName evidence="1">Small ribosomal subunit protein bS18</fullName>
    </recommendedName>
    <alternativeName>
        <fullName evidence="2">30S ribosomal protein S18</fullName>
    </alternativeName>
</protein>